<sequence length="455" mass="51224">MAAPSPSSPPNLLSPPPFRSPEASYFLRTCSNFSQLKQIHTKIIKHNLTNDQLLVRQLISVSSSFGETQYASLVFNQLQSPSTFTWNLMIRSLSVNHKPREALLLFILMMISHQSQFDKFTFPFVIKACLASSSIRLGTQVHGLAIKAGFFNDVFFQNTLMDLYFKCGKPDSGRKVFDKMPGRSIVSWTTMLYGLVSNSQLDSAEIVFNQMPMRNVVSWTAMITAYVKNRRPDEAFQLFRRMQVDDVKPNEFTIVNLLQASTQLGSLSMGRWVHDYAHKNGFVLDCFLGTALIDMYSKCGSLQDARKVFDVMQGKSLATWNSMITSLGVHGCGEEALSLFEEMEEEASVEPDAITFVGVLSACANTGNVKDGLRYFTRMIQVYGISPIREHNACMIQLLEQALEVEKASNLVESMDSDPDFNSSFGNEYTDGMNETNETPSQHQIMFTKWDTGRF</sequence>
<comment type="subcellular location">
    <subcellularLocation>
        <location evidence="2">Plastid</location>
        <location evidence="2">Chloroplast</location>
    </subcellularLocation>
</comment>
<comment type="similarity">
    <text evidence="2">Belongs to the PPR family. PCMP-A subfamily.</text>
</comment>
<comment type="online information" name="Pentatricopeptide repeat proteins">
    <link uri="https://ppr.plantenergy.uwa.edu.au"/>
</comment>
<evidence type="ECO:0000255" key="1"/>
<evidence type="ECO:0000305" key="2"/>
<dbReference type="EMBL" id="X97487">
    <property type="protein sequence ID" value="CAA66119.1"/>
    <property type="molecule type" value="mRNA"/>
</dbReference>
<dbReference type="EMBL" id="X98130">
    <property type="protein sequence ID" value="CAA66814.1"/>
    <property type="molecule type" value="Genomic_DNA"/>
</dbReference>
<dbReference type="EMBL" id="AB026648">
    <property type="protein sequence ID" value="BAB01728.1"/>
    <property type="molecule type" value="Genomic_DNA"/>
</dbReference>
<dbReference type="EMBL" id="CP002686">
    <property type="protein sequence ID" value="AEE77189.1"/>
    <property type="molecule type" value="Genomic_DNA"/>
</dbReference>
<dbReference type="EMBL" id="AY099658">
    <property type="protein sequence ID" value="AAM20509.1"/>
    <property type="molecule type" value="mRNA"/>
</dbReference>
<dbReference type="EMBL" id="BT000240">
    <property type="protein sequence ID" value="AAN15559.1"/>
    <property type="molecule type" value="mRNA"/>
</dbReference>
<dbReference type="RefSeq" id="NP_189297.1">
    <property type="nucleotide sequence ID" value="NM_113574.3"/>
</dbReference>
<dbReference type="SMR" id="Q38959"/>
<dbReference type="FunCoup" id="Q38959">
    <property type="interactions" value="521"/>
</dbReference>
<dbReference type="STRING" id="3702.Q38959"/>
<dbReference type="PaxDb" id="3702-AT3G26630.1"/>
<dbReference type="ProteomicsDB" id="249105"/>
<dbReference type="EnsemblPlants" id="AT3G26630.1">
    <property type="protein sequence ID" value="AT3G26630.1"/>
    <property type="gene ID" value="AT3G26630"/>
</dbReference>
<dbReference type="GeneID" id="822275"/>
<dbReference type="Gramene" id="AT3G26630.1">
    <property type="protein sequence ID" value="AT3G26630.1"/>
    <property type="gene ID" value="AT3G26630"/>
</dbReference>
<dbReference type="KEGG" id="ath:AT3G26630"/>
<dbReference type="Araport" id="AT3G26630"/>
<dbReference type="TAIR" id="AT3G26630"/>
<dbReference type="eggNOG" id="KOG4197">
    <property type="taxonomic scope" value="Eukaryota"/>
</dbReference>
<dbReference type="HOGENOM" id="CLU_002706_0_6_1"/>
<dbReference type="InParanoid" id="Q38959"/>
<dbReference type="OMA" id="FFQNTLM"/>
<dbReference type="PhylomeDB" id="Q38959"/>
<dbReference type="PRO" id="PR:Q38959"/>
<dbReference type="Proteomes" id="UP000006548">
    <property type="component" value="Chromosome 3"/>
</dbReference>
<dbReference type="ExpressionAtlas" id="Q38959">
    <property type="expression patterns" value="baseline and differential"/>
</dbReference>
<dbReference type="GO" id="GO:0009507">
    <property type="term" value="C:chloroplast"/>
    <property type="evidence" value="ECO:0007669"/>
    <property type="project" value="UniProtKB-SubCell"/>
</dbReference>
<dbReference type="GO" id="GO:0003729">
    <property type="term" value="F:mRNA binding"/>
    <property type="evidence" value="ECO:0000314"/>
    <property type="project" value="TAIR"/>
</dbReference>
<dbReference type="GO" id="GO:0009451">
    <property type="term" value="P:RNA modification"/>
    <property type="evidence" value="ECO:0007669"/>
    <property type="project" value="InterPro"/>
</dbReference>
<dbReference type="FunFam" id="1.25.40.10:FF:000970">
    <property type="entry name" value="Pentatricopeptide repeat-containing protein At3g26630, chloroplastic"/>
    <property type="match status" value="1"/>
</dbReference>
<dbReference type="FunFam" id="1.25.40.10:FF:002597">
    <property type="entry name" value="Pentatricopeptide repeat-containing protein At3g26630, chloroplastic"/>
    <property type="match status" value="1"/>
</dbReference>
<dbReference type="Gene3D" id="1.25.40.10">
    <property type="entry name" value="Tetratricopeptide repeat domain"/>
    <property type="match status" value="3"/>
</dbReference>
<dbReference type="InterPro" id="IPR002885">
    <property type="entry name" value="Pentatricopeptide_rpt"/>
</dbReference>
<dbReference type="InterPro" id="IPR046960">
    <property type="entry name" value="PPR_At4g14850-like_plant"/>
</dbReference>
<dbReference type="InterPro" id="IPR011990">
    <property type="entry name" value="TPR-like_helical_dom_sf"/>
</dbReference>
<dbReference type="NCBIfam" id="TIGR00756">
    <property type="entry name" value="PPR"/>
    <property type="match status" value="3"/>
</dbReference>
<dbReference type="PANTHER" id="PTHR47926:SF359">
    <property type="entry name" value="PENTACOTRIPEPTIDE-REPEAT REGION OF PRORP DOMAIN-CONTAINING PROTEIN"/>
    <property type="match status" value="1"/>
</dbReference>
<dbReference type="PANTHER" id="PTHR47926">
    <property type="entry name" value="PENTATRICOPEPTIDE REPEAT-CONTAINING PROTEIN"/>
    <property type="match status" value="1"/>
</dbReference>
<dbReference type="Pfam" id="PF01535">
    <property type="entry name" value="PPR"/>
    <property type="match status" value="3"/>
</dbReference>
<dbReference type="Pfam" id="PF13041">
    <property type="entry name" value="PPR_2"/>
    <property type="match status" value="2"/>
</dbReference>
<dbReference type="PROSITE" id="PS51375">
    <property type="entry name" value="PPR"/>
    <property type="match status" value="8"/>
</dbReference>
<keyword id="KW-0150">Chloroplast</keyword>
<keyword id="KW-0934">Plastid</keyword>
<keyword id="KW-1185">Reference proteome</keyword>
<keyword id="KW-0677">Repeat</keyword>
<keyword id="KW-0809">Transit peptide</keyword>
<protein>
    <recommendedName>
        <fullName>Pentatricopeptide repeat-containing protein At3g26630, chloroplastic</fullName>
    </recommendedName>
</protein>
<accession>Q38959</accession>
<name>PP257_ARATH</name>
<reference key="1">
    <citation type="journal article" date="1996" name="Nucleic Acids Res.">
        <title>Sequence analysis of an 81 kb contig from Arabidopsis thaliana chromosome III.</title>
        <authorList>
            <person name="Quigley F."/>
            <person name="Dao P."/>
            <person name="Cottet A."/>
            <person name="Mache R."/>
        </authorList>
    </citation>
    <scope>NUCLEOTIDE SEQUENCE [GENOMIC DNA / MRNA]</scope>
    <source>
        <strain>cv. Columbia</strain>
    </source>
</reference>
<reference key="2">
    <citation type="journal article" date="2000" name="DNA Res.">
        <title>Structural analysis of Arabidopsis thaliana chromosome 3. I. Sequence features of the regions of 4,504,864 bp covered by sixty P1 and TAC clones.</title>
        <authorList>
            <person name="Sato S."/>
            <person name="Nakamura Y."/>
            <person name="Kaneko T."/>
            <person name="Katoh T."/>
            <person name="Asamizu E."/>
            <person name="Tabata S."/>
        </authorList>
    </citation>
    <scope>NUCLEOTIDE SEQUENCE [LARGE SCALE GENOMIC DNA]</scope>
    <source>
        <strain>cv. Columbia</strain>
    </source>
</reference>
<reference key="3">
    <citation type="journal article" date="2017" name="Plant J.">
        <title>Araport11: a complete reannotation of the Arabidopsis thaliana reference genome.</title>
        <authorList>
            <person name="Cheng C.Y."/>
            <person name="Krishnakumar V."/>
            <person name="Chan A.P."/>
            <person name="Thibaud-Nissen F."/>
            <person name="Schobel S."/>
            <person name="Town C.D."/>
        </authorList>
    </citation>
    <scope>GENOME REANNOTATION</scope>
    <source>
        <strain>cv. Columbia</strain>
    </source>
</reference>
<reference key="4">
    <citation type="journal article" date="2003" name="Science">
        <title>Empirical analysis of transcriptional activity in the Arabidopsis genome.</title>
        <authorList>
            <person name="Yamada K."/>
            <person name="Lim J."/>
            <person name="Dale J.M."/>
            <person name="Chen H."/>
            <person name="Shinn P."/>
            <person name="Palm C.J."/>
            <person name="Southwick A.M."/>
            <person name="Wu H.C."/>
            <person name="Kim C.J."/>
            <person name="Nguyen M."/>
            <person name="Pham P.K."/>
            <person name="Cheuk R.F."/>
            <person name="Karlin-Newmann G."/>
            <person name="Liu S.X."/>
            <person name="Lam B."/>
            <person name="Sakano H."/>
            <person name="Wu T."/>
            <person name="Yu G."/>
            <person name="Miranda M."/>
            <person name="Quach H.L."/>
            <person name="Tripp M."/>
            <person name="Chang C.H."/>
            <person name="Lee J.M."/>
            <person name="Toriumi M.J."/>
            <person name="Chan M.M."/>
            <person name="Tang C.C."/>
            <person name="Onodera C.S."/>
            <person name="Deng J.M."/>
            <person name="Akiyama K."/>
            <person name="Ansari Y."/>
            <person name="Arakawa T."/>
            <person name="Banh J."/>
            <person name="Banno F."/>
            <person name="Bowser L."/>
            <person name="Brooks S.Y."/>
            <person name="Carninci P."/>
            <person name="Chao Q."/>
            <person name="Choy N."/>
            <person name="Enju A."/>
            <person name="Goldsmith A.D."/>
            <person name="Gurjal M."/>
            <person name="Hansen N.F."/>
            <person name="Hayashizaki Y."/>
            <person name="Johnson-Hopson C."/>
            <person name="Hsuan V.W."/>
            <person name="Iida K."/>
            <person name="Karnes M."/>
            <person name="Khan S."/>
            <person name="Koesema E."/>
            <person name="Ishida J."/>
            <person name="Jiang P.X."/>
            <person name="Jones T."/>
            <person name="Kawai J."/>
            <person name="Kamiya A."/>
            <person name="Meyers C."/>
            <person name="Nakajima M."/>
            <person name="Narusaka M."/>
            <person name="Seki M."/>
            <person name="Sakurai T."/>
            <person name="Satou M."/>
            <person name="Tamse R."/>
            <person name="Vaysberg M."/>
            <person name="Wallender E.K."/>
            <person name="Wong C."/>
            <person name="Yamamura Y."/>
            <person name="Yuan S."/>
            <person name="Shinozaki K."/>
            <person name="Davis R.W."/>
            <person name="Theologis A."/>
            <person name="Ecker J.R."/>
        </authorList>
    </citation>
    <scope>NUCLEOTIDE SEQUENCE [LARGE SCALE MRNA]</scope>
    <source>
        <strain>cv. Columbia</strain>
    </source>
</reference>
<reference key="5">
    <citation type="journal article" date="2000" name="Plant Mol. Biol.">
        <title>In Arabidopsis thaliana, 1% of the genome codes for a novel protein family unique to plants.</title>
        <authorList>
            <person name="Aubourg S."/>
            <person name="Boudet N."/>
            <person name="Kreis M."/>
            <person name="Lecharny A."/>
        </authorList>
    </citation>
    <scope>GENE FAMILY</scope>
</reference>
<reference key="6">
    <citation type="journal article" date="2004" name="Plant Cell">
        <title>Genome-wide analysis of Arabidopsis pentatricopeptide repeat proteins reveals their essential role in organelle biogenesis.</title>
        <authorList>
            <person name="Lurin C."/>
            <person name="Andres C."/>
            <person name="Aubourg S."/>
            <person name="Bellaoui M."/>
            <person name="Bitton F."/>
            <person name="Bruyere C."/>
            <person name="Caboche M."/>
            <person name="Debast C."/>
            <person name="Gualberto J."/>
            <person name="Hoffmann B."/>
            <person name="Lecharny A."/>
            <person name="Le Ret M."/>
            <person name="Martin-Magniette M.-L."/>
            <person name="Mireau H."/>
            <person name="Peeters N."/>
            <person name="Renou J.-P."/>
            <person name="Szurek B."/>
            <person name="Taconnat L."/>
            <person name="Small I."/>
        </authorList>
    </citation>
    <scope>GENE FAMILY</scope>
</reference>
<gene>
    <name type="primary">PCMP-A6</name>
    <name type="synonym">ORF9</name>
    <name type="synonym">PCMP-A1</name>
    <name type="ordered locus">At3g26630</name>
    <name type="ORF">MFE16.1</name>
</gene>
<feature type="transit peptide" description="Chloroplast" evidence="1">
    <location>
        <begin position="1"/>
        <end position="19"/>
    </location>
</feature>
<feature type="chain" id="PRO_0000356116" description="Pentatricopeptide repeat-containing protein At3g26630, chloroplastic">
    <location>
        <begin position="20"/>
        <end position="455"/>
    </location>
</feature>
<feature type="repeat" description="PPR 1">
    <location>
        <begin position="51"/>
        <end position="81"/>
    </location>
</feature>
<feature type="repeat" description="PPR 2">
    <location>
        <begin position="82"/>
        <end position="117"/>
    </location>
</feature>
<feature type="repeat" description="PPR 3">
    <location>
        <begin position="118"/>
        <end position="152"/>
    </location>
</feature>
<feature type="repeat" description="PPR 4">
    <location>
        <begin position="153"/>
        <end position="187"/>
    </location>
</feature>
<feature type="repeat" description="PPR 5">
    <location>
        <begin position="188"/>
        <end position="214"/>
    </location>
</feature>
<feature type="repeat" description="PPR 6">
    <location>
        <begin position="215"/>
        <end position="249"/>
    </location>
</feature>
<feature type="repeat" description="PPR 7">
    <location>
        <begin position="250"/>
        <end position="284"/>
    </location>
</feature>
<feature type="repeat" description="PPR 8">
    <location>
        <begin position="285"/>
        <end position="315"/>
    </location>
</feature>
<feature type="repeat" description="PPR 9">
    <location>
        <begin position="316"/>
        <end position="350"/>
    </location>
</feature>
<feature type="repeat" description="PPR 10">
    <location>
        <begin position="352"/>
        <end position="387"/>
    </location>
</feature>
<feature type="repeat" description="PPR 11">
    <location>
        <begin position="388"/>
        <end position="418"/>
    </location>
</feature>
<proteinExistence type="evidence at transcript level"/>
<organism>
    <name type="scientific">Arabidopsis thaliana</name>
    <name type="common">Mouse-ear cress</name>
    <dbReference type="NCBI Taxonomy" id="3702"/>
    <lineage>
        <taxon>Eukaryota</taxon>
        <taxon>Viridiplantae</taxon>
        <taxon>Streptophyta</taxon>
        <taxon>Embryophyta</taxon>
        <taxon>Tracheophyta</taxon>
        <taxon>Spermatophyta</taxon>
        <taxon>Magnoliopsida</taxon>
        <taxon>eudicotyledons</taxon>
        <taxon>Gunneridae</taxon>
        <taxon>Pentapetalae</taxon>
        <taxon>rosids</taxon>
        <taxon>malvids</taxon>
        <taxon>Brassicales</taxon>
        <taxon>Brassicaceae</taxon>
        <taxon>Camelineae</taxon>
        <taxon>Arabidopsis</taxon>
    </lineage>
</organism>